<evidence type="ECO:0000255" key="1"/>
<evidence type="ECO:0000269" key="2">
    <source>
    </source>
</evidence>
<evidence type="ECO:0000303" key="3">
    <source>
    </source>
</evidence>
<evidence type="ECO:0000305" key="4"/>
<evidence type="ECO:0000305" key="5">
    <source>
    </source>
</evidence>
<evidence type="ECO:0000312" key="6">
    <source>
        <dbReference type="EMBL" id="ADV36124.1"/>
    </source>
</evidence>
<comment type="function">
    <text evidence="2">Has antimicrobial activity against Gram-positive bacteria and fungi but has weak or no activity against a range of Gram-negative bacteria except P.faecalis. Active against the Gram-positive bacteria E.faecium 091299 (MIC=19 uM), E.faecalis 981 (MIC=19 uM), S.aureus ATCC 25923 (MIC=1.2 uM), S.carnosus KHS (MIC=4.8 uM), B.licheniformis X39 (MIC=2.4 uM) and R.rhodochrous X15 (MIC=1.2 uM). Active against the Gram-negative bacterium P.faecalis X29 (MIC=4.8 uM), is virtually inactive against E.coli ATCC 25922 (MIC=150 uM) and inactive against P.aeruginosa and S.typhi. Has antifungal activity against C.albicans ATCC 2002 (MIC=2.4 uM) and is also active against the slime mold 090223 (MIC=1.2 uM). Has low hemolytic activity against human erythrocytes (LC(50)=75 uM).</text>
</comment>
<comment type="subcellular location">
    <subcellularLocation>
        <location evidence="2">Secreted</location>
    </subcellularLocation>
</comment>
<comment type="tissue specificity">
    <text evidence="5">Expressed by the skin glands.</text>
</comment>
<comment type="mass spectrometry" mass="2664.4" method="Electrospray" evidence="2"/>
<comment type="similarity">
    <text evidence="1">Belongs to the frog skin active peptide (FSAP) family. Brevinin subfamily.</text>
</comment>
<proteinExistence type="evidence at protein level"/>
<keyword id="KW-0878">Amphibian defense peptide</keyword>
<keyword id="KW-0044">Antibiotic</keyword>
<keyword id="KW-0929">Antimicrobial</keyword>
<keyword id="KW-0165">Cleavage on pair of basic residues</keyword>
<keyword id="KW-0204">Cytolysis</keyword>
<keyword id="KW-0903">Direct protein sequencing</keyword>
<keyword id="KW-1015">Disulfide bond</keyword>
<keyword id="KW-0295">Fungicide</keyword>
<keyword id="KW-0354">Hemolysis</keyword>
<keyword id="KW-0964">Secreted</keyword>
<keyword id="KW-0732">Signal</keyword>
<name>BR11_ODOHA</name>
<feature type="signal peptide" evidence="1">
    <location>
        <begin position="1"/>
        <end position="22"/>
    </location>
</feature>
<feature type="propeptide" id="PRO_0000423521" evidence="1 2">
    <location>
        <begin position="23"/>
        <end position="45"/>
    </location>
</feature>
<feature type="peptide" id="PRO_0000423522" description="Brevinin-1HN1" evidence="2">
    <location>
        <begin position="48"/>
        <end position="71"/>
    </location>
</feature>
<feature type="disulfide bond" evidence="2">
    <location>
        <begin position="65"/>
        <end position="71"/>
    </location>
</feature>
<reference evidence="4 6" key="1">
    <citation type="journal article" date="2012" name="Peptides">
        <title>Novel antimicrobial peptides isolated from the skin secretions of Hainan odorous frog, Odorrana hainanensis.</title>
        <authorList>
            <person name="Wang H."/>
            <person name="Yu Z."/>
            <person name="Hu Y."/>
            <person name="Li F."/>
            <person name="Liu L."/>
            <person name="Zheng H."/>
            <person name="Meng H."/>
            <person name="Yang S."/>
            <person name="Yang X."/>
            <person name="Liu J."/>
        </authorList>
    </citation>
    <scope>NUCLEOTIDE SEQUENCE [MRNA]</scope>
    <scope>PROTEIN SEQUENCE OF 48-71</scope>
    <scope>SYNTHESIS OF 48-71</scope>
    <scope>FUNCTION</scope>
    <scope>SUBCELLULAR LOCATION</scope>
    <scope>MASS SPECTROMETRY</scope>
    <scope>DISULFIDE BOND</scope>
    <source>
        <tissue evidence="2">Skin</tissue>
        <tissue evidence="2">Skin secretion</tissue>
    </source>
</reference>
<accession>E7EKC4</accession>
<dbReference type="EMBL" id="HQ735101">
    <property type="protein sequence ID" value="ADV36124.1"/>
    <property type="molecule type" value="mRNA"/>
</dbReference>
<dbReference type="GO" id="GO:0005576">
    <property type="term" value="C:extracellular region"/>
    <property type="evidence" value="ECO:0007669"/>
    <property type="project" value="UniProtKB-SubCell"/>
</dbReference>
<dbReference type="GO" id="GO:0050832">
    <property type="term" value="P:defense response to fungus"/>
    <property type="evidence" value="ECO:0007669"/>
    <property type="project" value="UniProtKB-KW"/>
</dbReference>
<dbReference type="GO" id="GO:0050829">
    <property type="term" value="P:defense response to Gram-negative bacterium"/>
    <property type="evidence" value="ECO:0007669"/>
    <property type="project" value="UniProtKB-ARBA"/>
</dbReference>
<dbReference type="GO" id="GO:0050830">
    <property type="term" value="P:defense response to Gram-positive bacterium"/>
    <property type="evidence" value="ECO:0007669"/>
    <property type="project" value="UniProtKB-ARBA"/>
</dbReference>
<dbReference type="GO" id="GO:0031640">
    <property type="term" value="P:killing of cells of another organism"/>
    <property type="evidence" value="ECO:0007669"/>
    <property type="project" value="UniProtKB-KW"/>
</dbReference>
<dbReference type="InterPro" id="IPR012520">
    <property type="entry name" value="Antimicrobial_frog_1"/>
</dbReference>
<dbReference type="InterPro" id="IPR004275">
    <property type="entry name" value="Frog_antimicrobial_propeptide"/>
</dbReference>
<dbReference type="Pfam" id="PF08018">
    <property type="entry name" value="Antimicrobial_1"/>
    <property type="match status" value="1"/>
</dbReference>
<dbReference type="Pfam" id="PF03032">
    <property type="entry name" value="FSAP_sig_propep"/>
    <property type="match status" value="1"/>
</dbReference>
<protein>
    <recommendedName>
        <fullName evidence="3">Brevinin-1HN1</fullName>
    </recommendedName>
</protein>
<organism>
    <name type="scientific">Odorrana hainanensis</name>
    <name type="common">Odor frog</name>
    <name type="synonym">Rana hainanensis</name>
    <dbReference type="NCBI Taxonomy" id="431935"/>
    <lineage>
        <taxon>Eukaryota</taxon>
        <taxon>Metazoa</taxon>
        <taxon>Chordata</taxon>
        <taxon>Craniata</taxon>
        <taxon>Vertebrata</taxon>
        <taxon>Euteleostomi</taxon>
        <taxon>Amphibia</taxon>
        <taxon>Batrachia</taxon>
        <taxon>Anura</taxon>
        <taxon>Neobatrachia</taxon>
        <taxon>Ranoidea</taxon>
        <taxon>Ranidae</taxon>
        <taxon>Odorrana</taxon>
    </lineage>
</organism>
<sequence length="71" mass="8276">MFTSKKPLLLLFFLGTINLSLCEQERDADEEERRDDPDERDVEVEKRFLPLIASLAANFVPKIFCKITKKC</sequence>